<protein>
    <recommendedName>
        <fullName evidence="1">UDP-3-O-acyl-N-acetylglucosamine deacetylase</fullName>
        <shortName evidence="1">UDP-3-O-acyl-GlcNAc deacetylase</shortName>
        <ecNumber evidence="1">3.5.1.108</ecNumber>
    </recommendedName>
    <alternativeName>
        <fullName evidence="1">UDP-3-O-[R-3-hydroxymyristoyl]-N-acetylglucosamine deacetylase</fullName>
    </alternativeName>
</protein>
<comment type="function">
    <text evidence="1">Catalyzes the hydrolysis of UDP-3-O-myristoyl-N-acetylglucosamine to form UDP-3-O-myristoylglucosamine and acetate, the committed step in lipid A biosynthesis.</text>
</comment>
<comment type="catalytic activity">
    <reaction evidence="1">
        <text>a UDP-3-O-[(3R)-3-hydroxyacyl]-N-acetyl-alpha-D-glucosamine + H2O = a UDP-3-O-[(3R)-3-hydroxyacyl]-alpha-D-glucosamine + acetate</text>
        <dbReference type="Rhea" id="RHEA:67816"/>
        <dbReference type="ChEBI" id="CHEBI:15377"/>
        <dbReference type="ChEBI" id="CHEBI:30089"/>
        <dbReference type="ChEBI" id="CHEBI:137740"/>
        <dbReference type="ChEBI" id="CHEBI:173225"/>
        <dbReference type="EC" id="3.5.1.108"/>
    </reaction>
</comment>
<comment type="cofactor">
    <cofactor evidence="1">
        <name>Zn(2+)</name>
        <dbReference type="ChEBI" id="CHEBI:29105"/>
    </cofactor>
</comment>
<comment type="pathway">
    <text evidence="1">Glycolipid biosynthesis; lipid IV(A) biosynthesis; lipid IV(A) from (3R)-3-hydroxytetradecanoyl-[acyl-carrier-protein] and UDP-N-acetyl-alpha-D-glucosamine: step 2/6.</text>
</comment>
<comment type="similarity">
    <text evidence="1">Belongs to the LpxC family.</text>
</comment>
<evidence type="ECO:0000255" key="1">
    <source>
        <dbReference type="HAMAP-Rule" id="MF_00388"/>
    </source>
</evidence>
<accession>B1XT16</accession>
<gene>
    <name evidence="1" type="primary">lpxC</name>
    <name type="ordered locus">Pnec_0188</name>
</gene>
<keyword id="KW-0378">Hydrolase</keyword>
<keyword id="KW-0441">Lipid A biosynthesis</keyword>
<keyword id="KW-0444">Lipid biosynthesis</keyword>
<keyword id="KW-0443">Lipid metabolism</keyword>
<keyword id="KW-0479">Metal-binding</keyword>
<keyword id="KW-0862">Zinc</keyword>
<proteinExistence type="inferred from homology"/>
<feature type="chain" id="PRO_1000122805" description="UDP-3-O-acyl-N-acetylglucosamine deacetylase">
    <location>
        <begin position="1"/>
        <end position="304"/>
    </location>
</feature>
<feature type="active site" description="Proton donor" evidence="1">
    <location>
        <position position="264"/>
    </location>
</feature>
<feature type="binding site" evidence="1">
    <location>
        <position position="78"/>
    </location>
    <ligand>
        <name>Zn(2+)</name>
        <dbReference type="ChEBI" id="CHEBI:29105"/>
    </ligand>
</feature>
<feature type="binding site" evidence="1">
    <location>
        <position position="237"/>
    </location>
    <ligand>
        <name>Zn(2+)</name>
        <dbReference type="ChEBI" id="CHEBI:29105"/>
    </ligand>
</feature>
<feature type="binding site" evidence="1">
    <location>
        <position position="241"/>
    </location>
    <ligand>
        <name>Zn(2+)</name>
        <dbReference type="ChEBI" id="CHEBI:29105"/>
    </ligand>
</feature>
<dbReference type="EC" id="3.5.1.108" evidence="1"/>
<dbReference type="EMBL" id="CP001010">
    <property type="protein sequence ID" value="ACB43493.1"/>
    <property type="molecule type" value="Genomic_DNA"/>
</dbReference>
<dbReference type="SMR" id="B1XT16"/>
<dbReference type="STRING" id="452638.Pnec_0188"/>
<dbReference type="KEGG" id="pne:Pnec_0188"/>
<dbReference type="eggNOG" id="COG0774">
    <property type="taxonomic scope" value="Bacteria"/>
</dbReference>
<dbReference type="HOGENOM" id="CLU_046528_1_0_4"/>
<dbReference type="OrthoDB" id="9802746at2"/>
<dbReference type="UniPathway" id="UPA00359">
    <property type="reaction ID" value="UER00478"/>
</dbReference>
<dbReference type="GO" id="GO:0016020">
    <property type="term" value="C:membrane"/>
    <property type="evidence" value="ECO:0007669"/>
    <property type="project" value="GOC"/>
</dbReference>
<dbReference type="GO" id="GO:0046872">
    <property type="term" value="F:metal ion binding"/>
    <property type="evidence" value="ECO:0007669"/>
    <property type="project" value="UniProtKB-KW"/>
</dbReference>
<dbReference type="GO" id="GO:0103117">
    <property type="term" value="F:UDP-3-O-acyl-N-acetylglucosamine deacetylase activity"/>
    <property type="evidence" value="ECO:0007669"/>
    <property type="project" value="UniProtKB-UniRule"/>
</dbReference>
<dbReference type="GO" id="GO:0009245">
    <property type="term" value="P:lipid A biosynthetic process"/>
    <property type="evidence" value="ECO:0007669"/>
    <property type="project" value="UniProtKB-UniRule"/>
</dbReference>
<dbReference type="Gene3D" id="3.30.230.20">
    <property type="entry name" value="lpxc deacetylase, domain 1"/>
    <property type="match status" value="1"/>
</dbReference>
<dbReference type="Gene3D" id="3.30.1700.10">
    <property type="entry name" value="lpxc deacetylase, domain 2"/>
    <property type="match status" value="1"/>
</dbReference>
<dbReference type="HAMAP" id="MF_00388">
    <property type="entry name" value="LpxC"/>
    <property type="match status" value="1"/>
</dbReference>
<dbReference type="InterPro" id="IPR020568">
    <property type="entry name" value="Ribosomal_Su5_D2-typ_SF"/>
</dbReference>
<dbReference type="InterPro" id="IPR004463">
    <property type="entry name" value="UDP-acyl_GlcNac_deAcase"/>
</dbReference>
<dbReference type="InterPro" id="IPR011334">
    <property type="entry name" value="UDP-acyl_GlcNac_deAcase_C"/>
</dbReference>
<dbReference type="InterPro" id="IPR015870">
    <property type="entry name" value="UDP-acyl_N-AcGlcN_deAcase_N"/>
</dbReference>
<dbReference type="NCBIfam" id="TIGR00325">
    <property type="entry name" value="lpxC"/>
    <property type="match status" value="1"/>
</dbReference>
<dbReference type="PANTHER" id="PTHR33694">
    <property type="entry name" value="UDP-3-O-ACYL-N-ACETYLGLUCOSAMINE DEACETYLASE 1, MITOCHONDRIAL-RELATED"/>
    <property type="match status" value="1"/>
</dbReference>
<dbReference type="PANTHER" id="PTHR33694:SF1">
    <property type="entry name" value="UDP-3-O-ACYL-N-ACETYLGLUCOSAMINE DEACETYLASE 1, MITOCHONDRIAL-RELATED"/>
    <property type="match status" value="1"/>
</dbReference>
<dbReference type="Pfam" id="PF03331">
    <property type="entry name" value="LpxC"/>
    <property type="match status" value="1"/>
</dbReference>
<dbReference type="SUPFAM" id="SSF54211">
    <property type="entry name" value="Ribosomal protein S5 domain 2-like"/>
    <property type="match status" value="2"/>
</dbReference>
<reference key="1">
    <citation type="journal article" date="2013" name="Proc. Natl. Acad. Sci. U.S.A.">
        <title>Polynucleobacter necessarius, a model for genome reduction in both free-living and symbiotic bacteria.</title>
        <authorList>
            <person name="Boscaro V."/>
            <person name="Felletti M."/>
            <person name="Vannini C."/>
            <person name="Ackerman M.S."/>
            <person name="Chain P.S."/>
            <person name="Malfatti S."/>
            <person name="Vergez L.M."/>
            <person name="Shin M."/>
            <person name="Doak T.G."/>
            <person name="Lynch M."/>
            <person name="Petroni G."/>
        </authorList>
    </citation>
    <scope>NUCLEOTIDE SEQUENCE [LARGE SCALE GENOMIC DNA]</scope>
    <source>
        <strain>STIR1</strain>
    </source>
</reference>
<name>LPXC_POLNS</name>
<organism>
    <name type="scientific">Polynucleobacter necessarius subsp. necessarius (strain STIR1)</name>
    <dbReference type="NCBI Taxonomy" id="452638"/>
    <lineage>
        <taxon>Bacteria</taxon>
        <taxon>Pseudomonadati</taxon>
        <taxon>Pseudomonadota</taxon>
        <taxon>Betaproteobacteria</taxon>
        <taxon>Burkholderiales</taxon>
        <taxon>Burkholderiaceae</taxon>
        <taxon>Polynucleobacter</taxon>
    </lineage>
</organism>
<sequence length="304" mass="33470">MMKQRTIATPVKTVGIGLHSGRKVTISIKPAPVNSGVQFIRVDTPERSVVPATALAVCDTRLASVIQKDGVRVSTVEHLLSACAGLGLDNLLIELDGEEVPIMDGSAASFLFLIESAGIAEQEVPRQFVVIKKPVEVREGDKLARLEPFFGFKLDFTIDFKHPAVDKTGQRFVVDFSEHAYRSEIGRARTFGFAHEVEALREMGLARGGSLDNAIVLDEHRILNNEELRYEDEFVRHKILDAIGDLYLIGHPIVGAYVAEKSGHALNNALLRKLLEDPSSYEISTFAENKAPGAYSQESQPLFF</sequence>